<comment type="function">
    <text evidence="1">Component of the THO subcomplex of the TREX complex which is thought to couple mRNA transcription, processing and nuclear export, and which specifically associates with spliced mRNA and not with unspliced pre-mRNA. Required for efficient export of polyadenylated RNA. Plays a key structural role in the oligomerization of the THO-DDX39B complex. TREX is recruited to spliced mRNAs by a transcription-independent mechanism, binds to mRNA upstream of the exon-junction complex (EJC) and is recruited in a splicing- and cap-dependent manner to a region near the 5' end of the mRNA where it functions in mRNA export to the cytoplasm via the TAP/NXF1 pathway.</text>
</comment>
<comment type="subunit">
    <text evidence="1">Tetramer; as part of a THO-DDX39B complex. Component of the THO subcomplex, which is composed of THOC1, THOC2, THOC3, THOC5, THOC6 and THOC7. Component of the transcription/export (TREX) complex at least composed of ALYREF/THOC4, DDX39B, SARNP/CIP29, CHTOP and the THO subcomplex; in the complex interacts with THOC1, THOC2 and THOC5; forms a coiled-coil dimer with THOC5; together with THOC5 and THOC6, plays a key structural role in the oligomerization of the THO-DDX39B complex. TREX seems to have a dynamic structure involving ATP-dependent remodeling. Interacts with NIF3L1.</text>
</comment>
<comment type="subcellular location">
    <subcellularLocation>
        <location evidence="1">Cytoplasm</location>
    </subcellularLocation>
    <subcellularLocation>
        <location evidence="1">Nucleus</location>
    </subcellularLocation>
    <subcellularLocation>
        <location evidence="1">Nucleus speckle</location>
    </subcellularLocation>
    <text evidence="1">Interaction with THOC5 is required for nuclear localization.</text>
</comment>
<comment type="similarity">
    <text evidence="3">Belongs to the THOC7 family.</text>
</comment>
<name>THOC7_BOVIN</name>
<keyword id="KW-0007">Acetylation</keyword>
<keyword id="KW-0175">Coiled coil</keyword>
<keyword id="KW-0963">Cytoplasm</keyword>
<keyword id="KW-0507">mRNA processing</keyword>
<keyword id="KW-0508">mRNA splicing</keyword>
<keyword id="KW-0509">mRNA transport</keyword>
<keyword id="KW-0539">Nucleus</keyword>
<keyword id="KW-0597">Phosphoprotein</keyword>
<keyword id="KW-1185">Reference proteome</keyword>
<keyword id="KW-0694">RNA-binding</keyword>
<keyword id="KW-0813">Transport</keyword>
<evidence type="ECO:0000250" key="1">
    <source>
        <dbReference type="UniProtKB" id="Q6I9Y2"/>
    </source>
</evidence>
<evidence type="ECO:0000256" key="2">
    <source>
        <dbReference type="SAM" id="MobiDB-lite"/>
    </source>
</evidence>
<evidence type="ECO:0000305" key="3"/>
<organism>
    <name type="scientific">Bos taurus</name>
    <name type="common">Bovine</name>
    <dbReference type="NCBI Taxonomy" id="9913"/>
    <lineage>
        <taxon>Eukaryota</taxon>
        <taxon>Metazoa</taxon>
        <taxon>Chordata</taxon>
        <taxon>Craniata</taxon>
        <taxon>Vertebrata</taxon>
        <taxon>Euteleostomi</taxon>
        <taxon>Mammalia</taxon>
        <taxon>Eutheria</taxon>
        <taxon>Laurasiatheria</taxon>
        <taxon>Artiodactyla</taxon>
        <taxon>Ruminantia</taxon>
        <taxon>Pecora</taxon>
        <taxon>Bovidae</taxon>
        <taxon>Bovinae</taxon>
        <taxon>Bos</taxon>
    </lineage>
</organism>
<accession>Q3SZ60</accession>
<reference key="1">
    <citation type="submission" date="2005-08" db="EMBL/GenBank/DDBJ databases">
        <authorList>
            <consortium name="NIH - Mammalian Gene Collection (MGC) project"/>
        </authorList>
    </citation>
    <scope>NUCLEOTIDE SEQUENCE [LARGE SCALE MRNA]</scope>
    <source>
        <strain>Hereford</strain>
        <tissue>Heart ventricle</tissue>
    </source>
</reference>
<sequence length="204" mass="23743">MGAVTDDEVIRKRLLIDGDGAGDDRRINLLVKSFIKWCNSGSQEEGYSQYQRMLSTLSQCEFSMGKTLLVYDMNLREMENYEKIYKEIECSIAGAHEKIAECKKQILQAKRIRKNRQEYDALAKVIQHHPDRHETLKELEALGKELEHLSHIKESVEDKLELRRKQFHVLLSTIHELQQTLENDEKLSEVEEAQEASMETDPKP</sequence>
<protein>
    <recommendedName>
        <fullName>THO complex subunit 7 homolog</fullName>
    </recommendedName>
</protein>
<feature type="initiator methionine" description="Removed" evidence="1">
    <location>
        <position position="1"/>
    </location>
</feature>
<feature type="chain" id="PRO_0000310753" description="THO complex subunit 7 homolog">
    <location>
        <begin position="2"/>
        <end position="204"/>
    </location>
</feature>
<feature type="region of interest" description="Interaction with THOC5" evidence="1">
    <location>
        <begin position="50"/>
        <end position="137"/>
    </location>
</feature>
<feature type="region of interest" description="Interaction with NIF3L1" evidence="1">
    <location>
        <begin position="105"/>
        <end position="204"/>
    </location>
</feature>
<feature type="region of interest" description="Disordered" evidence="2">
    <location>
        <begin position="182"/>
        <end position="204"/>
    </location>
</feature>
<feature type="coiled-coil region" evidence="1">
    <location>
        <begin position="146"/>
        <end position="204"/>
    </location>
</feature>
<feature type="modified residue" description="N-acetylglycine" evidence="1">
    <location>
        <position position="2"/>
    </location>
</feature>
<feature type="modified residue" description="Phosphothreonine" evidence="1">
    <location>
        <position position="5"/>
    </location>
</feature>
<feature type="modified residue" description="N6-acetyllysine" evidence="1">
    <location>
        <position position="36"/>
    </location>
</feature>
<gene>
    <name type="primary">THOC7</name>
</gene>
<dbReference type="EMBL" id="BC103118">
    <property type="protein sequence ID" value="AAI03119.1"/>
    <property type="molecule type" value="mRNA"/>
</dbReference>
<dbReference type="RefSeq" id="NP_001035604.1">
    <property type="nucleotide sequence ID" value="NM_001040514.2"/>
</dbReference>
<dbReference type="RefSeq" id="XP_005217641.1">
    <property type="nucleotide sequence ID" value="XM_005217584.3"/>
</dbReference>
<dbReference type="SMR" id="Q3SZ60"/>
<dbReference type="FunCoup" id="Q3SZ60">
    <property type="interactions" value="2590"/>
</dbReference>
<dbReference type="STRING" id="9913.ENSBTAP00000068025"/>
<dbReference type="PaxDb" id="9913-ENSBTAP00000012008"/>
<dbReference type="Ensembl" id="ENSBTAT00000125692.1">
    <property type="protein sequence ID" value="ENSBTAP00000095271.1"/>
    <property type="gene ID" value="ENSBTAG00000032872.5"/>
</dbReference>
<dbReference type="GeneID" id="510250"/>
<dbReference type="KEGG" id="bta:510250"/>
<dbReference type="CTD" id="80145"/>
<dbReference type="VEuPathDB" id="HostDB:ENSBTAG00000032872"/>
<dbReference type="VGNC" id="VGNC:106977">
    <property type="gene designation" value="THOC7"/>
</dbReference>
<dbReference type="eggNOG" id="KOG3215">
    <property type="taxonomic scope" value="Eukaryota"/>
</dbReference>
<dbReference type="GeneTree" id="ENSGT00390000002873"/>
<dbReference type="HOGENOM" id="CLU_087727_0_0_1"/>
<dbReference type="InParanoid" id="Q3SZ60"/>
<dbReference type="OMA" id="WANSKND"/>
<dbReference type="OrthoDB" id="205166at2759"/>
<dbReference type="TreeFam" id="TF319308"/>
<dbReference type="Reactome" id="R-BTA-159236">
    <property type="pathway name" value="Transport of Mature mRNA derived from an Intron-Containing Transcript"/>
</dbReference>
<dbReference type="Reactome" id="R-BTA-72187">
    <property type="pathway name" value="mRNA 3'-end processing"/>
</dbReference>
<dbReference type="Reactome" id="R-BTA-73856">
    <property type="pathway name" value="RNA Polymerase II Transcription Termination"/>
</dbReference>
<dbReference type="Proteomes" id="UP000009136">
    <property type="component" value="Chromosome 22"/>
</dbReference>
<dbReference type="Bgee" id="ENSBTAG00000032872">
    <property type="expression patterns" value="Expressed in omasum and 108 other cell types or tissues"/>
</dbReference>
<dbReference type="GO" id="GO:0005737">
    <property type="term" value="C:cytoplasm"/>
    <property type="evidence" value="ECO:0000250"/>
    <property type="project" value="UniProtKB"/>
</dbReference>
<dbReference type="GO" id="GO:0016607">
    <property type="term" value="C:nuclear speck"/>
    <property type="evidence" value="ECO:0007669"/>
    <property type="project" value="UniProtKB-SubCell"/>
</dbReference>
<dbReference type="GO" id="GO:0005634">
    <property type="term" value="C:nucleus"/>
    <property type="evidence" value="ECO:0000250"/>
    <property type="project" value="UniProtKB"/>
</dbReference>
<dbReference type="GO" id="GO:0000445">
    <property type="term" value="C:THO complex part of transcription export complex"/>
    <property type="evidence" value="ECO:0000318"/>
    <property type="project" value="GO_Central"/>
</dbReference>
<dbReference type="GO" id="GO:0003723">
    <property type="term" value="F:RNA binding"/>
    <property type="evidence" value="ECO:0007669"/>
    <property type="project" value="UniProtKB-KW"/>
</dbReference>
<dbReference type="GO" id="GO:0006406">
    <property type="term" value="P:mRNA export from nucleus"/>
    <property type="evidence" value="ECO:0000318"/>
    <property type="project" value="GO_Central"/>
</dbReference>
<dbReference type="GO" id="GO:0006397">
    <property type="term" value="P:mRNA processing"/>
    <property type="evidence" value="ECO:0007669"/>
    <property type="project" value="UniProtKB-KW"/>
</dbReference>
<dbReference type="GO" id="GO:0008380">
    <property type="term" value="P:RNA splicing"/>
    <property type="evidence" value="ECO:0007669"/>
    <property type="project" value="UniProtKB-KW"/>
</dbReference>
<dbReference type="InterPro" id="IPR008501">
    <property type="entry name" value="THOC7/Mft1"/>
</dbReference>
<dbReference type="PANTHER" id="PTHR23405">
    <property type="entry name" value="MAINTENANCE OF KILLER 16 MAK16 PROTEIN-RELATED"/>
    <property type="match status" value="1"/>
</dbReference>
<dbReference type="PANTHER" id="PTHR23405:SF5">
    <property type="entry name" value="THO COMPLEX SUBUNIT 7 HOMOLOG"/>
    <property type="match status" value="1"/>
</dbReference>
<dbReference type="Pfam" id="PF05615">
    <property type="entry name" value="THOC7"/>
    <property type="match status" value="1"/>
</dbReference>
<proteinExistence type="evidence at transcript level"/>